<dbReference type="EMBL" id="BA000004">
    <property type="protein sequence ID" value="BAB04987.1"/>
    <property type="molecule type" value="Genomic_DNA"/>
</dbReference>
<dbReference type="PIR" id="D83808">
    <property type="entry name" value="D83808"/>
</dbReference>
<dbReference type="RefSeq" id="WP_010897436.1">
    <property type="nucleotide sequence ID" value="NC_002570.2"/>
</dbReference>
<dbReference type="SMR" id="Q9KDE5"/>
<dbReference type="STRING" id="272558.gene:10727162"/>
<dbReference type="GeneID" id="87596891"/>
<dbReference type="KEGG" id="bha:BH1268"/>
<dbReference type="eggNOG" id="COG4472">
    <property type="taxonomic scope" value="Bacteria"/>
</dbReference>
<dbReference type="HOGENOM" id="CLU_162466_0_0_9"/>
<dbReference type="OrthoDB" id="9796303at2"/>
<dbReference type="Proteomes" id="UP000001258">
    <property type="component" value="Chromosome"/>
</dbReference>
<dbReference type="HAMAP" id="MF_01507">
    <property type="entry name" value="UPF0297"/>
    <property type="match status" value="1"/>
</dbReference>
<dbReference type="InterPro" id="IPR009309">
    <property type="entry name" value="IreB"/>
</dbReference>
<dbReference type="NCBIfam" id="NF003997">
    <property type="entry name" value="PRK05473.1"/>
    <property type="match status" value="1"/>
</dbReference>
<dbReference type="PANTHER" id="PTHR40067">
    <property type="entry name" value="UPF0297 PROTEIN YRZL"/>
    <property type="match status" value="1"/>
</dbReference>
<dbReference type="PANTHER" id="PTHR40067:SF1">
    <property type="entry name" value="UPF0297 PROTEIN YRZL"/>
    <property type="match status" value="1"/>
</dbReference>
<dbReference type="Pfam" id="PF06135">
    <property type="entry name" value="IreB"/>
    <property type="match status" value="1"/>
</dbReference>
<dbReference type="PIRSF" id="PIRSF037258">
    <property type="entry name" value="DUF965_bac"/>
    <property type="match status" value="1"/>
</dbReference>
<evidence type="ECO:0000255" key="1">
    <source>
        <dbReference type="HAMAP-Rule" id="MF_01507"/>
    </source>
</evidence>
<reference key="1">
    <citation type="journal article" date="2000" name="Nucleic Acids Res.">
        <title>Complete genome sequence of the alkaliphilic bacterium Bacillus halodurans and genomic sequence comparison with Bacillus subtilis.</title>
        <authorList>
            <person name="Takami H."/>
            <person name="Nakasone K."/>
            <person name="Takaki Y."/>
            <person name="Maeno G."/>
            <person name="Sasaki R."/>
            <person name="Masui N."/>
            <person name="Fuji F."/>
            <person name="Hirama C."/>
            <person name="Nakamura Y."/>
            <person name="Ogasawara N."/>
            <person name="Kuhara S."/>
            <person name="Horikoshi K."/>
        </authorList>
    </citation>
    <scope>NUCLEOTIDE SEQUENCE [LARGE SCALE GENOMIC DNA]</scope>
    <source>
        <strain>ATCC BAA-125 / DSM 18197 / FERM 7344 / JCM 9153 / C-125</strain>
    </source>
</reference>
<gene>
    <name type="ordered locus">BH1268</name>
</gene>
<accession>Q9KDE5</accession>
<protein>
    <recommendedName>
        <fullName evidence="1">UPF0297 protein BH1268</fullName>
    </recommendedName>
</protein>
<name>Y1268_HALH5</name>
<proteinExistence type="inferred from homology"/>
<keyword id="KW-1185">Reference proteome</keyword>
<sequence>MSSMDNTMKFNVNEEPVSVDVQEVLMSVYEALEEKGYNPINQIVGYLLSGDPAYIPRHKDARTLIRKLERDELIEELVKSYLSQHRKSLE</sequence>
<organism>
    <name type="scientific">Halalkalibacterium halodurans (strain ATCC BAA-125 / DSM 18197 / FERM 7344 / JCM 9153 / C-125)</name>
    <name type="common">Bacillus halodurans</name>
    <dbReference type="NCBI Taxonomy" id="272558"/>
    <lineage>
        <taxon>Bacteria</taxon>
        <taxon>Bacillati</taxon>
        <taxon>Bacillota</taxon>
        <taxon>Bacilli</taxon>
        <taxon>Bacillales</taxon>
        <taxon>Bacillaceae</taxon>
        <taxon>Halalkalibacterium (ex Joshi et al. 2022)</taxon>
    </lineage>
</organism>
<comment type="similarity">
    <text evidence="1">Belongs to the UPF0297 family.</text>
</comment>
<feature type="chain" id="PRO_0000216961" description="UPF0297 protein BH1268">
    <location>
        <begin position="1"/>
        <end position="90"/>
    </location>
</feature>